<organism>
    <name type="scientific">Staphylococcus aureus (strain Mu50 / ATCC 700699)</name>
    <dbReference type="NCBI Taxonomy" id="158878"/>
    <lineage>
        <taxon>Bacteria</taxon>
        <taxon>Bacillati</taxon>
        <taxon>Bacillota</taxon>
        <taxon>Bacilli</taxon>
        <taxon>Bacillales</taxon>
        <taxon>Staphylococcaceae</taxon>
        <taxon>Staphylococcus</taxon>
    </lineage>
</organism>
<protein>
    <recommendedName>
        <fullName evidence="1">Uroporphyrinogen decarboxylase</fullName>
        <shortName evidence="1">UPD</shortName>
        <shortName evidence="1">URO-D</shortName>
        <ecNumber evidence="1">4.1.1.37</ecNumber>
    </recommendedName>
</protein>
<reference key="1">
    <citation type="journal article" date="2001" name="Lancet">
        <title>Whole genome sequencing of meticillin-resistant Staphylococcus aureus.</title>
        <authorList>
            <person name="Kuroda M."/>
            <person name="Ohta T."/>
            <person name="Uchiyama I."/>
            <person name="Baba T."/>
            <person name="Yuzawa H."/>
            <person name="Kobayashi I."/>
            <person name="Cui L."/>
            <person name="Oguchi A."/>
            <person name="Aoki K."/>
            <person name="Nagai Y."/>
            <person name="Lian J.-Q."/>
            <person name="Ito T."/>
            <person name="Kanamori M."/>
            <person name="Matsumaru H."/>
            <person name="Maruyama A."/>
            <person name="Murakami H."/>
            <person name="Hosoyama A."/>
            <person name="Mizutani-Ui Y."/>
            <person name="Takahashi N.K."/>
            <person name="Sawano T."/>
            <person name="Inoue R."/>
            <person name="Kaito C."/>
            <person name="Sekimizu K."/>
            <person name="Hirakawa H."/>
            <person name="Kuhara S."/>
            <person name="Goto S."/>
            <person name="Yabuzaki J."/>
            <person name="Kanehisa M."/>
            <person name="Yamashita A."/>
            <person name="Oshima K."/>
            <person name="Furuya K."/>
            <person name="Yoshino C."/>
            <person name="Shiba T."/>
            <person name="Hattori M."/>
            <person name="Ogasawara N."/>
            <person name="Hayashi H."/>
            <person name="Hiramatsu K."/>
        </authorList>
    </citation>
    <scope>NUCLEOTIDE SEQUENCE [LARGE SCALE GENOMIC DNA]</scope>
    <source>
        <strain>Mu50 / ATCC 700699</strain>
    </source>
</reference>
<name>DCUP_STAAM</name>
<keyword id="KW-0963">Cytoplasm</keyword>
<keyword id="KW-0210">Decarboxylase</keyword>
<keyword id="KW-0456">Lyase</keyword>
<keyword id="KW-0627">Porphyrin biosynthesis</keyword>
<accession>P67419</accession>
<accession>Q99T42</accession>
<comment type="function">
    <text evidence="1">Catalyzes the decarboxylation of four acetate groups of uroporphyrinogen-III to yield coproporphyrinogen-III.</text>
</comment>
<comment type="catalytic activity">
    <reaction evidence="1">
        <text>uroporphyrinogen III + 4 H(+) = coproporphyrinogen III + 4 CO2</text>
        <dbReference type="Rhea" id="RHEA:19865"/>
        <dbReference type="ChEBI" id="CHEBI:15378"/>
        <dbReference type="ChEBI" id="CHEBI:16526"/>
        <dbReference type="ChEBI" id="CHEBI:57308"/>
        <dbReference type="ChEBI" id="CHEBI:57309"/>
        <dbReference type="EC" id="4.1.1.37"/>
    </reaction>
</comment>
<comment type="pathway">
    <text evidence="1">Porphyrin-containing compound metabolism; protoporphyrin-IX biosynthesis; coproporphyrinogen-III from 5-aminolevulinate: step 4/4.</text>
</comment>
<comment type="subunit">
    <text evidence="1">Homodimer.</text>
</comment>
<comment type="subcellular location">
    <subcellularLocation>
        <location evidence="1">Cytoplasm</location>
    </subcellularLocation>
</comment>
<comment type="similarity">
    <text evidence="1">Belongs to the uroporphyrinogen decarboxylase family.</text>
</comment>
<gene>
    <name evidence="1" type="primary">hemE</name>
    <name type="ordered locus">SAV1834</name>
</gene>
<dbReference type="EC" id="4.1.1.37" evidence="1"/>
<dbReference type="EMBL" id="BA000017">
    <property type="protein sequence ID" value="BAB57996.1"/>
    <property type="molecule type" value="Genomic_DNA"/>
</dbReference>
<dbReference type="RefSeq" id="WP_000233526.1">
    <property type="nucleotide sequence ID" value="NC_002758.2"/>
</dbReference>
<dbReference type="SMR" id="P67419"/>
<dbReference type="KEGG" id="sav:SAV1834"/>
<dbReference type="HOGENOM" id="CLU_040933_0_1_9"/>
<dbReference type="PhylomeDB" id="P67419"/>
<dbReference type="UniPathway" id="UPA00251">
    <property type="reaction ID" value="UER00321"/>
</dbReference>
<dbReference type="Proteomes" id="UP000002481">
    <property type="component" value="Chromosome"/>
</dbReference>
<dbReference type="GO" id="GO:0005829">
    <property type="term" value="C:cytosol"/>
    <property type="evidence" value="ECO:0007669"/>
    <property type="project" value="TreeGrafter"/>
</dbReference>
<dbReference type="GO" id="GO:0004853">
    <property type="term" value="F:uroporphyrinogen decarboxylase activity"/>
    <property type="evidence" value="ECO:0007669"/>
    <property type="project" value="UniProtKB-UniRule"/>
</dbReference>
<dbReference type="GO" id="GO:0006782">
    <property type="term" value="P:protoporphyrinogen IX biosynthetic process"/>
    <property type="evidence" value="ECO:0007669"/>
    <property type="project" value="UniProtKB-UniRule"/>
</dbReference>
<dbReference type="CDD" id="cd00717">
    <property type="entry name" value="URO-D"/>
    <property type="match status" value="1"/>
</dbReference>
<dbReference type="FunFam" id="3.20.20.210:FF:000005">
    <property type="entry name" value="Uroporphyrinogen decarboxylase"/>
    <property type="match status" value="1"/>
</dbReference>
<dbReference type="Gene3D" id="3.20.20.210">
    <property type="match status" value="1"/>
</dbReference>
<dbReference type="HAMAP" id="MF_00218">
    <property type="entry name" value="URO_D"/>
    <property type="match status" value="1"/>
</dbReference>
<dbReference type="InterPro" id="IPR038071">
    <property type="entry name" value="UROD/MetE-like_sf"/>
</dbReference>
<dbReference type="InterPro" id="IPR006361">
    <property type="entry name" value="Uroporphyrinogen_deCO2ase_HemE"/>
</dbReference>
<dbReference type="InterPro" id="IPR000257">
    <property type="entry name" value="Uroporphyrinogen_deCOase"/>
</dbReference>
<dbReference type="NCBIfam" id="TIGR01464">
    <property type="entry name" value="hemE"/>
    <property type="match status" value="1"/>
</dbReference>
<dbReference type="PANTHER" id="PTHR21091">
    <property type="entry name" value="METHYLTETRAHYDROFOLATE:HOMOCYSTEINE METHYLTRANSFERASE RELATED"/>
    <property type="match status" value="1"/>
</dbReference>
<dbReference type="PANTHER" id="PTHR21091:SF169">
    <property type="entry name" value="UROPORPHYRINOGEN DECARBOXYLASE"/>
    <property type="match status" value="1"/>
</dbReference>
<dbReference type="Pfam" id="PF01208">
    <property type="entry name" value="URO-D"/>
    <property type="match status" value="1"/>
</dbReference>
<dbReference type="SUPFAM" id="SSF51726">
    <property type="entry name" value="UROD/MetE-like"/>
    <property type="match status" value="1"/>
</dbReference>
<dbReference type="PROSITE" id="PS00906">
    <property type="entry name" value="UROD_1"/>
    <property type="match status" value="1"/>
</dbReference>
<dbReference type="PROSITE" id="PS00907">
    <property type="entry name" value="UROD_2"/>
    <property type="match status" value="1"/>
</dbReference>
<sequence length="345" mass="39352">MVHNKNNTILKMIKGEETSHTPVWFMRQAGRSQPEYRKLKEKYSLFDITHQPELCAYVTHLPVDNYHTDAAILYKDIMTPLKPIGVDVEIKSGIGPVIHNPIKTIQDVEKLSQIDPERDVPYVLDTIKLLTEEKLNVPLIGFTGAPFTLASYMIEGGPSKNYNFTKAMMYRDEATWFALMNHLVDVSVKYVTAQVEAGAELIQIFDSWVGALNVEDYRRYIKPHMIRLISEVKEKHDVPVILFGVGASHLINEWNDLPIDVLGLDWRTSINQAQQLGVTKTLQGNLDPSILLAPWNVIEERLKPILDQGMENGKHIFNLGHGVFPEVQPETLRKVSEFVHTYTQR</sequence>
<proteinExistence type="inferred from homology"/>
<evidence type="ECO:0000255" key="1">
    <source>
        <dbReference type="HAMAP-Rule" id="MF_00218"/>
    </source>
</evidence>
<feature type="chain" id="PRO_0000187640" description="Uroporphyrinogen decarboxylase">
    <location>
        <begin position="1"/>
        <end position="345"/>
    </location>
</feature>
<feature type="binding site" evidence="1">
    <location>
        <begin position="27"/>
        <end position="31"/>
    </location>
    <ligand>
        <name>substrate</name>
    </ligand>
</feature>
<feature type="binding site" evidence="1">
    <location>
        <position position="46"/>
    </location>
    <ligand>
        <name>substrate</name>
    </ligand>
</feature>
<feature type="binding site" evidence="1">
    <location>
        <position position="76"/>
    </location>
    <ligand>
        <name>substrate</name>
    </ligand>
</feature>
<feature type="binding site" evidence="1">
    <location>
        <position position="152"/>
    </location>
    <ligand>
        <name>substrate</name>
    </ligand>
</feature>
<feature type="binding site" evidence="1">
    <location>
        <position position="207"/>
    </location>
    <ligand>
        <name>substrate</name>
    </ligand>
</feature>
<feature type="binding site" evidence="1">
    <location>
        <position position="321"/>
    </location>
    <ligand>
        <name>substrate</name>
    </ligand>
</feature>
<feature type="site" description="Transition state stabilizer" evidence="1">
    <location>
        <position position="76"/>
    </location>
</feature>